<protein>
    <recommendedName>
        <fullName evidence="29">Voltage-gated delayed rectifier potassium channel KCNH1</fullName>
    </recommendedName>
    <alternativeName>
        <fullName evidence="27">Ether-a-go-go potassium channel 1</fullName>
        <shortName evidence="26 27">EAG channel 1</shortName>
        <shortName evidence="28">h-eag</shortName>
        <shortName evidence="26 27">hEAG1</shortName>
    </alternativeName>
    <alternativeName>
        <fullName>Potassium voltage-gated channel subfamily H member 1</fullName>
    </alternativeName>
    <alternativeName>
        <fullName evidence="30">Voltage-gated potassium channel subunit Kv10.1</fullName>
    </alternativeName>
</protein>
<feature type="chain" id="PRO_0000053994" description="Voltage-gated delayed rectifier potassium channel KCNH1">
    <location>
        <begin position="1"/>
        <end position="989"/>
    </location>
</feature>
<feature type="topological domain" description="Cytoplasmic" evidence="2">
    <location>
        <begin position="1"/>
        <end position="220"/>
    </location>
</feature>
<feature type="transmembrane region" description="Helical; Name=Segment S1" evidence="2">
    <location>
        <begin position="221"/>
        <end position="241"/>
    </location>
</feature>
<feature type="topological domain" description="Extracellular" evidence="2">
    <location>
        <begin position="242"/>
        <end position="248"/>
    </location>
</feature>
<feature type="transmembrane region" description="Helical; Name=Segment S2" evidence="2">
    <location>
        <begin position="249"/>
        <end position="269"/>
    </location>
</feature>
<feature type="topological domain" description="Cytoplasmic" evidence="2">
    <location>
        <begin position="270"/>
        <end position="290"/>
    </location>
</feature>
<feature type="transmembrane region" description="Helical; Name=Segment S3" evidence="2">
    <location>
        <begin position="291"/>
        <end position="309"/>
    </location>
</feature>
<feature type="topological domain" description="Extracellular" evidence="2">
    <location>
        <begin position="310"/>
        <end position="345"/>
    </location>
</feature>
<feature type="transmembrane region" description="Helical; Voltage-sensor; Name=Segment S4" evidence="2">
    <location>
        <begin position="346"/>
        <end position="368"/>
    </location>
</feature>
<feature type="topological domain" description="Cytoplasmic" evidence="2">
    <location>
        <begin position="369"/>
        <end position="377"/>
    </location>
</feature>
<feature type="transmembrane region" description="Helical; Name=Segment S5" evidence="2">
    <location>
        <begin position="378"/>
        <end position="399"/>
    </location>
</feature>
<feature type="topological domain" description="Extracellular" evidence="2">
    <location>
        <begin position="400"/>
        <end position="448"/>
    </location>
</feature>
<feature type="intramembrane region" description="Pore-forming; Name=Segment H5" evidence="2">
    <location>
        <begin position="449"/>
        <end position="470"/>
    </location>
</feature>
<feature type="topological domain" description="Extracellular" evidence="2">
    <location>
        <begin position="471"/>
        <end position="477"/>
    </location>
</feature>
<feature type="transmembrane region" description="Helical; Name=Segment S6" evidence="2">
    <location>
        <begin position="478"/>
        <end position="498"/>
    </location>
</feature>
<feature type="topological domain" description="Cytoplasmic" evidence="2">
    <location>
        <begin position="499"/>
        <end position="989"/>
    </location>
</feature>
<feature type="domain" description="PAS" evidence="4">
    <location>
        <begin position="14"/>
        <end position="94"/>
    </location>
</feature>
<feature type="domain" description="PAC" evidence="5">
    <location>
        <begin position="93"/>
        <end position="145"/>
    </location>
</feature>
<feature type="region of interest" description="Required for phosphatidylinositol bisphosphate binding" evidence="18">
    <location>
        <begin position="151"/>
        <end position="162"/>
    </location>
</feature>
<feature type="region of interest" description="Calmodulin-binding" evidence="7">
    <location>
        <begin position="673"/>
        <end position="770"/>
    </location>
</feature>
<feature type="region of interest" description="Interaction with cyclic nucleotide-binding pocket" evidence="1">
    <location>
        <begin position="699"/>
        <end position="701"/>
    </location>
</feature>
<feature type="region of interest" description="Disordered" evidence="6">
    <location>
        <begin position="855"/>
        <end position="886"/>
    </location>
</feature>
<feature type="region of interest" description="CAD (involved in subunit assembly)" evidence="2">
    <location>
        <begin position="924"/>
        <end position="964"/>
    </location>
</feature>
<feature type="region of interest" description="Disordered" evidence="6">
    <location>
        <begin position="962"/>
        <end position="989"/>
    </location>
</feature>
<feature type="short sequence motif" description="Selectivity filter" evidence="2">
    <location>
        <begin position="463"/>
        <end position="468"/>
    </location>
</feature>
<feature type="compositionally biased region" description="Basic and acidic residues" evidence="6">
    <location>
        <begin position="855"/>
        <end position="879"/>
    </location>
</feature>
<feature type="compositionally biased region" description="Basic and acidic residues" evidence="6">
    <location>
        <begin position="980"/>
        <end position="989"/>
    </location>
</feature>
<feature type="modified residue" description="Phosphoserine" evidence="1">
    <location>
        <position position="974"/>
    </location>
</feature>
<feature type="modified residue" description="Phosphoserine" evidence="1">
    <location>
        <position position="978"/>
    </location>
</feature>
<feature type="modified residue" description="Phosphoserine" evidence="1">
    <location>
        <position position="981"/>
    </location>
</feature>
<feature type="glycosylation site" description="N-linked (GlcNAc...) asparagine" evidence="3">
    <location>
        <position position="415"/>
    </location>
</feature>
<feature type="glycosylation site" description="N-linked (GlcNAc...) asparagine" evidence="3">
    <location>
        <position position="433"/>
    </location>
</feature>
<feature type="splice variant" id="VSP_000964" description="In isoform 1." evidence="24 25">
    <location>
        <begin position="318"/>
        <end position="344"/>
    </location>
</feature>
<feature type="sequence variant" id="VAR_072612" description="In TMBTS; gain-of-function mutation resulting in a decreased threshold of channel activation and slower deactivation compared to wild-type; dbSNP:rs727502822." evidence="15">
    <original>K</original>
    <variation>N</variation>
    <location>
        <position position="217"/>
    </location>
</feature>
<feature type="sequence variant" id="VAR_073957" description="In ZLS1; gain-of-function effect; accelerated channel activation and slower deactivation; associated in cis with L-383; dbSNP:rs730882172." evidence="17">
    <original>S</original>
    <variation>Y</variation>
    <location>
        <position position="352"/>
    </location>
</feature>
<feature type="sequence variant" id="VAR_073958" description="In ZLS1; gain-of-function effect; accelerated channel activation and slower deactivation; dbSNP:rs730882174." evidence="17">
    <original>G</original>
    <variation>R</variation>
    <location>
        <position position="375"/>
    </location>
</feature>
<feature type="sequence variant" id="VAR_073959" description="In ZLS1; dbSNP:rs730882176." evidence="17">
    <original>L</original>
    <variation>V</variation>
    <location>
        <position position="379"/>
    </location>
</feature>
<feature type="sequence variant" id="VAR_073960" description="In ZLS1; gain-of-function effect; accelerated channel activation and slower deactivation; associated in cis with Y-352; dbSNP:rs730882173." evidence="17">
    <original>V</original>
    <variation>L</variation>
    <location>
        <position position="383"/>
    </location>
</feature>
<feature type="sequence variant" id="VAR_072613" description="In TMBTS; gain-of-function mutation resulting in a decreased threshold of channel activation and slower deactivation compared to wild-type; dbSNP:rs1553345948." evidence="15">
    <original>L</original>
    <variation>F</variation>
    <location>
        <position position="489"/>
    </location>
</feature>
<feature type="sequence variant" id="VAR_072614" description="In TMBTS and ZLS1; gain-of-function effect; resulting in a decreased threshold of channel activation and slower deactivation; dbSNP:rs727502819." evidence="15 17">
    <original>I</original>
    <variation>V</variation>
    <location>
        <position position="494"/>
    </location>
</feature>
<feature type="sequence variant" id="VAR_073961" description="In ZLS1; gain-of-function effect; increased conductance at negative potentials; dbSNP:rs730882175." evidence="17">
    <original>G</original>
    <variation>R</variation>
    <location>
        <position position="496"/>
    </location>
</feature>
<feature type="sequence variant" id="VAR_072615" description="In TMBTS; gain-of-function mutation resulting in a decreased threshold of channel activation and slower deactivation compared to wild-type; dbSNP:rs727502821." evidence="15">
    <original>Q</original>
    <variation>R</variation>
    <location>
        <position position="503"/>
    </location>
</feature>
<feature type="mutagenesis site" description="Shifts the voltage-dependence of channel gating and decreases the rate of channel opening." evidence="10">
    <original>YNL</original>
    <variation>ANA</variation>
    <location>
        <begin position="699"/>
        <end position="701"/>
    </location>
</feature>
<feature type="mutagenesis site" description="Abolishes inhibition of channel activity by elevated cytoplasmic Ca(2+)." evidence="21">
    <original>V</original>
    <variation>S</variation>
    <location>
        <position position="737"/>
    </location>
</feature>
<feature type="mutagenesis site" description="Abolishes inhibition of channel activity by elevated cytoplasmic Ca(2+)." evidence="21">
    <original>L</original>
    <variation>S</variation>
    <location>
        <position position="740"/>
    </location>
</feature>
<feature type="strand" evidence="33">
    <location>
        <begin position="29"/>
        <end position="34"/>
    </location>
</feature>
<feature type="strand" evidence="33">
    <location>
        <begin position="41"/>
        <end position="45"/>
    </location>
</feature>
<feature type="helix" evidence="33">
    <location>
        <begin position="47"/>
        <end position="53"/>
    </location>
</feature>
<feature type="helix" evidence="33">
    <location>
        <begin position="57"/>
        <end position="59"/>
    </location>
</feature>
<feature type="turn" evidence="33">
    <location>
        <begin position="60"/>
        <end position="62"/>
    </location>
</feature>
<feature type="helix" evidence="33">
    <location>
        <begin position="68"/>
        <end position="70"/>
    </location>
</feature>
<feature type="helix" evidence="33">
    <location>
        <begin position="77"/>
        <end position="88"/>
    </location>
</feature>
<feature type="strand" evidence="33">
    <location>
        <begin position="93"/>
        <end position="100"/>
    </location>
</feature>
<feature type="strand" evidence="33">
    <location>
        <begin position="106"/>
        <end position="117"/>
    </location>
</feature>
<feature type="strand" evidence="33">
    <location>
        <begin position="123"/>
        <end position="132"/>
    </location>
</feature>
<proteinExistence type="evidence at protein level"/>
<dbReference type="EMBL" id="AJ001366">
    <property type="protein sequence ID" value="CAA04700.1"/>
    <property type="molecule type" value="mRNA"/>
</dbReference>
<dbReference type="EMBL" id="AF078741">
    <property type="protein sequence ID" value="AAC68668.1"/>
    <property type="molecule type" value="mRNA"/>
</dbReference>
<dbReference type="EMBL" id="AF078742">
    <property type="protein sequence ID" value="AAC68669.1"/>
    <property type="molecule type" value="mRNA"/>
</dbReference>
<dbReference type="EMBL" id="AC092017">
    <property type="status" value="NOT_ANNOTATED_CDS"/>
    <property type="molecule type" value="Genomic_DNA"/>
</dbReference>
<dbReference type="EMBL" id="AC096636">
    <property type="status" value="NOT_ANNOTATED_CDS"/>
    <property type="molecule type" value="Genomic_DNA"/>
</dbReference>
<dbReference type="EMBL" id="AC099755">
    <property type="status" value="NOT_ANNOTATED_CDS"/>
    <property type="molecule type" value="Genomic_DNA"/>
</dbReference>
<dbReference type="EMBL" id="AL590132">
    <property type="status" value="NOT_ANNOTATED_CDS"/>
    <property type="molecule type" value="Genomic_DNA"/>
</dbReference>
<dbReference type="EMBL" id="CH471100">
    <property type="protein sequence ID" value="EAW93424.1"/>
    <property type="molecule type" value="Genomic_DNA"/>
</dbReference>
<dbReference type="EMBL" id="CH471100">
    <property type="protein sequence ID" value="EAW93425.1"/>
    <property type="molecule type" value="Genomic_DNA"/>
</dbReference>
<dbReference type="EMBL" id="BC113709">
    <property type="protein sequence ID" value="AAI13710.1"/>
    <property type="molecule type" value="mRNA"/>
</dbReference>
<dbReference type="EMBL" id="BC143599">
    <property type="protein sequence ID" value="AAI43600.1"/>
    <property type="molecule type" value="mRNA"/>
</dbReference>
<dbReference type="CCDS" id="CCDS1496.1">
    <molecule id="O95259-1"/>
</dbReference>
<dbReference type="CCDS" id="CCDS31015.1">
    <molecule id="O95259-2"/>
</dbReference>
<dbReference type="RefSeq" id="NP_002229.1">
    <molecule id="O95259-2"/>
    <property type="nucleotide sequence ID" value="NM_002238.4"/>
</dbReference>
<dbReference type="RefSeq" id="NP_758872.1">
    <molecule id="O95259-1"/>
    <property type="nucleotide sequence ID" value="NM_172362.3"/>
</dbReference>
<dbReference type="PDB" id="5J7E">
    <property type="method" value="X-ray"/>
    <property type="resolution" value="1.90 A"/>
    <property type="chains" value="A/B/C/D/E/F=1-146"/>
</dbReference>
<dbReference type="PDBsum" id="5J7E"/>
<dbReference type="SMR" id="O95259"/>
<dbReference type="BioGRID" id="109958">
    <property type="interactions" value="15"/>
</dbReference>
<dbReference type="CORUM" id="O95259"/>
<dbReference type="FunCoup" id="O95259">
    <property type="interactions" value="643"/>
</dbReference>
<dbReference type="IntAct" id="O95259">
    <property type="interactions" value="11"/>
</dbReference>
<dbReference type="MINT" id="O95259"/>
<dbReference type="STRING" id="9606.ENSP00000271751"/>
<dbReference type="BindingDB" id="O95259"/>
<dbReference type="ChEMBL" id="CHEMBL3841"/>
<dbReference type="DrugBank" id="DB00637">
    <property type="generic name" value="Astemizole"/>
</dbReference>
<dbReference type="DrugBank" id="DB00228">
    <property type="generic name" value="Enflurane"/>
</dbReference>
<dbReference type="DrugBank" id="DB00458">
    <property type="generic name" value="Imipramine"/>
</dbReference>
<dbReference type="DrugBank" id="DB01110">
    <property type="generic name" value="Miconazole"/>
</dbReference>
<dbReference type="DrugBank" id="DB01069">
    <property type="generic name" value="Promethazine"/>
</dbReference>
<dbReference type="DrugCentral" id="O95259"/>
<dbReference type="GuidetoPHARMACOLOGY" id="570"/>
<dbReference type="TCDB" id="1.A.1.20.10">
    <property type="family name" value="the voltage-gated ion channel (vic) superfamily"/>
</dbReference>
<dbReference type="TCDB" id="1.I.1.1.3">
    <property type="family name" value="the nuclear pore complex (npc) family"/>
</dbReference>
<dbReference type="GlyCosmos" id="O95259">
    <property type="glycosylation" value="3 sites, 1 glycan"/>
</dbReference>
<dbReference type="GlyGen" id="O95259">
    <property type="glycosylation" value="4 sites, 1 O-linked glycan (2 sites)"/>
</dbReference>
<dbReference type="iPTMnet" id="O95259"/>
<dbReference type="PhosphoSitePlus" id="O95259"/>
<dbReference type="BioMuta" id="KCNH1"/>
<dbReference type="jPOST" id="O95259"/>
<dbReference type="MassIVE" id="O95259"/>
<dbReference type="PaxDb" id="9606-ENSP00000271751"/>
<dbReference type="PeptideAtlas" id="O95259"/>
<dbReference type="ProteomicsDB" id="50755">
    <molecule id="O95259-1"/>
</dbReference>
<dbReference type="ProteomicsDB" id="50756">
    <molecule id="O95259-2"/>
</dbReference>
<dbReference type="ABCD" id="O95259">
    <property type="antibodies" value="9 sequenced antibodies"/>
</dbReference>
<dbReference type="Antibodypedia" id="20707">
    <property type="antibodies" value="230 antibodies from 28 providers"/>
</dbReference>
<dbReference type="DNASU" id="3756"/>
<dbReference type="Ensembl" id="ENST00000271751.10">
    <molecule id="O95259-1"/>
    <property type="protein sequence ID" value="ENSP00000271751.4"/>
    <property type="gene ID" value="ENSG00000143473.14"/>
</dbReference>
<dbReference type="Ensembl" id="ENST00000638960.1">
    <molecule id="O95259-2"/>
    <property type="protein sequence ID" value="ENSP00000492302.1"/>
    <property type="gene ID" value="ENSG00000143473.14"/>
</dbReference>
<dbReference type="Ensembl" id="ENST00000639952.1">
    <molecule id="O95259-2"/>
    <property type="protein sequence ID" value="ENSP00000492697.1"/>
    <property type="gene ID" value="ENSG00000143473.14"/>
</dbReference>
<dbReference type="Ensembl" id="ENST00000640528.1">
    <molecule id="O95259-2"/>
    <property type="protein sequence ID" value="ENSP00000491725.1"/>
    <property type="gene ID" value="ENSG00000143473.14"/>
</dbReference>
<dbReference type="Ensembl" id="ENST00000640710.1">
    <molecule id="O95259-2"/>
    <property type="protein sequence ID" value="ENSP00000492513.1"/>
    <property type="gene ID" value="ENSG00000143473.14"/>
</dbReference>
<dbReference type="GeneID" id="3756"/>
<dbReference type="KEGG" id="hsa:3756"/>
<dbReference type="MANE-Select" id="ENST00000271751.10">
    <property type="protein sequence ID" value="ENSP00000271751.4"/>
    <property type="RefSeq nucleotide sequence ID" value="NM_172362.3"/>
    <property type="RefSeq protein sequence ID" value="NP_758872.1"/>
</dbReference>
<dbReference type="UCSC" id="uc001hib.3">
    <molecule id="O95259-1"/>
    <property type="organism name" value="human"/>
</dbReference>
<dbReference type="AGR" id="HGNC:6250"/>
<dbReference type="CTD" id="3756"/>
<dbReference type="DisGeNET" id="3756"/>
<dbReference type="GeneCards" id="KCNH1"/>
<dbReference type="HGNC" id="HGNC:6250">
    <property type="gene designation" value="KCNH1"/>
</dbReference>
<dbReference type="HPA" id="ENSG00000143473">
    <property type="expression patterns" value="Tissue enriched (brain)"/>
</dbReference>
<dbReference type="MalaCards" id="KCNH1"/>
<dbReference type="MIM" id="135500">
    <property type="type" value="phenotype"/>
</dbReference>
<dbReference type="MIM" id="603305">
    <property type="type" value="gene"/>
</dbReference>
<dbReference type="MIM" id="611816">
    <property type="type" value="phenotype"/>
</dbReference>
<dbReference type="neXtProt" id="NX_O95259"/>
<dbReference type="OpenTargets" id="ENSG00000143473"/>
<dbReference type="Orphanet" id="420561">
    <property type="disease" value="Temple-Baraitser syndrome"/>
</dbReference>
<dbReference type="Orphanet" id="3473">
    <property type="disease" value="Zimmermann-Laband syndrome"/>
</dbReference>
<dbReference type="PharmGKB" id="PA30037"/>
<dbReference type="VEuPathDB" id="HostDB:ENSG00000143473"/>
<dbReference type="eggNOG" id="KOG0501">
    <property type="taxonomic scope" value="Eukaryota"/>
</dbReference>
<dbReference type="GeneTree" id="ENSGT00940000155793"/>
<dbReference type="HOGENOM" id="CLU_005746_3_1_1"/>
<dbReference type="InParanoid" id="O95259"/>
<dbReference type="OMA" id="HEMISNV"/>
<dbReference type="OrthoDB" id="447251at2759"/>
<dbReference type="PAN-GO" id="O95259">
    <property type="GO annotations" value="4 GO annotations based on evolutionary models"/>
</dbReference>
<dbReference type="PhylomeDB" id="O95259"/>
<dbReference type="TreeFam" id="TF313130"/>
<dbReference type="PathwayCommons" id="O95259"/>
<dbReference type="Reactome" id="R-HSA-1296072">
    <property type="pathway name" value="Voltage gated Potassium channels"/>
</dbReference>
<dbReference type="SignaLink" id="O95259"/>
<dbReference type="BioGRID-ORCS" id="3756">
    <property type="hits" value="6 hits in 1151 CRISPR screens"/>
</dbReference>
<dbReference type="ChiTaRS" id="KCNH1">
    <property type="organism name" value="human"/>
</dbReference>
<dbReference type="GeneWiki" id="KCNH1"/>
<dbReference type="GenomeRNAi" id="3756"/>
<dbReference type="Pharos" id="O95259">
    <property type="development level" value="Tclin"/>
</dbReference>
<dbReference type="PRO" id="PR:O95259"/>
<dbReference type="Proteomes" id="UP000005640">
    <property type="component" value="Chromosome 1"/>
</dbReference>
<dbReference type="RNAct" id="O95259">
    <property type="molecule type" value="protein"/>
</dbReference>
<dbReference type="Bgee" id="ENSG00000143473">
    <property type="expression patterns" value="Expressed in Brodmann (1909) area 9 and 104 other cell types or tissues"/>
</dbReference>
<dbReference type="ExpressionAtlas" id="O95259">
    <property type="expression patterns" value="baseline and differential"/>
</dbReference>
<dbReference type="GO" id="GO:0030424">
    <property type="term" value="C:axon"/>
    <property type="evidence" value="ECO:0007669"/>
    <property type="project" value="UniProtKB-SubCell"/>
</dbReference>
<dbReference type="GO" id="GO:0030425">
    <property type="term" value="C:dendrite"/>
    <property type="evidence" value="ECO:0007669"/>
    <property type="project" value="UniProtKB-SubCell"/>
</dbReference>
<dbReference type="GO" id="GO:0031901">
    <property type="term" value="C:early endosome membrane"/>
    <property type="evidence" value="ECO:0000314"/>
    <property type="project" value="UniProtKB"/>
</dbReference>
<dbReference type="GO" id="GO:0043231">
    <property type="term" value="C:intracellular membrane-bounded organelle"/>
    <property type="evidence" value="ECO:0000314"/>
    <property type="project" value="HPA"/>
</dbReference>
<dbReference type="GO" id="GO:0005637">
    <property type="term" value="C:nuclear inner membrane"/>
    <property type="evidence" value="ECO:0007669"/>
    <property type="project" value="UniProtKB-SubCell"/>
</dbReference>
<dbReference type="GO" id="GO:0043204">
    <property type="term" value="C:perikaryon"/>
    <property type="evidence" value="ECO:0007669"/>
    <property type="project" value="UniProtKB-SubCell"/>
</dbReference>
<dbReference type="GO" id="GO:0005886">
    <property type="term" value="C:plasma membrane"/>
    <property type="evidence" value="ECO:0000314"/>
    <property type="project" value="UniProtKB"/>
</dbReference>
<dbReference type="GO" id="GO:0098839">
    <property type="term" value="C:postsynaptic density membrane"/>
    <property type="evidence" value="ECO:0007669"/>
    <property type="project" value="UniProtKB-SubCell"/>
</dbReference>
<dbReference type="GO" id="GO:0042734">
    <property type="term" value="C:presynaptic membrane"/>
    <property type="evidence" value="ECO:0007669"/>
    <property type="project" value="UniProtKB-SubCell"/>
</dbReference>
<dbReference type="GO" id="GO:0008076">
    <property type="term" value="C:voltage-gated potassium channel complex"/>
    <property type="evidence" value="ECO:0000314"/>
    <property type="project" value="UniProtKB"/>
</dbReference>
<dbReference type="GO" id="GO:0005516">
    <property type="term" value="F:calmodulin binding"/>
    <property type="evidence" value="ECO:0007669"/>
    <property type="project" value="UniProtKB-KW"/>
</dbReference>
<dbReference type="GO" id="GO:0005251">
    <property type="term" value="F:delayed rectifier potassium channel activity"/>
    <property type="evidence" value="ECO:0000314"/>
    <property type="project" value="UniProtKB"/>
</dbReference>
<dbReference type="GO" id="GO:1902936">
    <property type="term" value="F:phosphatidylinositol bisphosphate binding"/>
    <property type="evidence" value="ECO:0000314"/>
    <property type="project" value="UniProtKB"/>
</dbReference>
<dbReference type="GO" id="GO:0071277">
    <property type="term" value="P:cellular response to calcium ion"/>
    <property type="evidence" value="ECO:0000315"/>
    <property type="project" value="UniProtKB"/>
</dbReference>
<dbReference type="GO" id="GO:0007520">
    <property type="term" value="P:myoblast fusion"/>
    <property type="evidence" value="ECO:0000304"/>
    <property type="project" value="ProtInc"/>
</dbReference>
<dbReference type="GO" id="GO:0071805">
    <property type="term" value="P:potassium ion transmembrane transport"/>
    <property type="evidence" value="ECO:0000314"/>
    <property type="project" value="UniProtKB"/>
</dbReference>
<dbReference type="GO" id="GO:0006813">
    <property type="term" value="P:potassium ion transport"/>
    <property type="evidence" value="ECO:0000314"/>
    <property type="project" value="UniProtKB"/>
</dbReference>
<dbReference type="GO" id="GO:0042127">
    <property type="term" value="P:regulation of cell population proliferation"/>
    <property type="evidence" value="ECO:0000315"/>
    <property type="project" value="UniProtKB"/>
</dbReference>
<dbReference type="GO" id="GO:0042391">
    <property type="term" value="P:regulation of membrane potential"/>
    <property type="evidence" value="ECO:0000318"/>
    <property type="project" value="GO_Central"/>
</dbReference>
<dbReference type="CDD" id="cd00038">
    <property type="entry name" value="CAP_ED"/>
    <property type="match status" value="1"/>
</dbReference>
<dbReference type="CDD" id="cd00130">
    <property type="entry name" value="PAS"/>
    <property type="match status" value="1"/>
</dbReference>
<dbReference type="FunFam" id="1.10.1200.260:FF:000003">
    <property type="entry name" value="Potassium voltage-gated channel subfamily H member 1"/>
    <property type="match status" value="1"/>
</dbReference>
<dbReference type="FunFam" id="2.60.120.10:FF:000009">
    <property type="entry name" value="Potassium voltage-gated channel subfamily H member 1"/>
    <property type="match status" value="1"/>
</dbReference>
<dbReference type="FunFam" id="3.30.450.20:FF:000009">
    <property type="entry name" value="Potassium voltage-gated channel subfamily H member 1"/>
    <property type="match status" value="1"/>
</dbReference>
<dbReference type="FunFam" id="1.10.287.70:FF:000035">
    <property type="entry name" value="Potassium voltage-gated channel, subfamily H (Eag-related), member 1"/>
    <property type="match status" value="1"/>
</dbReference>
<dbReference type="Gene3D" id="1.10.1200.260">
    <property type="match status" value="1"/>
</dbReference>
<dbReference type="Gene3D" id="1.10.287.70">
    <property type="match status" value="1"/>
</dbReference>
<dbReference type="Gene3D" id="2.60.120.10">
    <property type="entry name" value="Jelly Rolls"/>
    <property type="match status" value="1"/>
</dbReference>
<dbReference type="Gene3D" id="3.30.450.20">
    <property type="entry name" value="PAS domain"/>
    <property type="match status" value="1"/>
</dbReference>
<dbReference type="InterPro" id="IPR000595">
    <property type="entry name" value="cNMP-bd_dom"/>
</dbReference>
<dbReference type="InterPro" id="IPR018490">
    <property type="entry name" value="cNMP-bd_dom_sf"/>
</dbReference>
<dbReference type="InterPro" id="IPR005821">
    <property type="entry name" value="Ion_trans_dom"/>
</dbReference>
<dbReference type="InterPro" id="IPR003949">
    <property type="entry name" value="K_chnl_volt-dep_EAG"/>
</dbReference>
<dbReference type="InterPro" id="IPR003938">
    <property type="entry name" value="K_chnl_volt-dep_EAG/ELK/ERG"/>
</dbReference>
<dbReference type="InterPro" id="IPR050818">
    <property type="entry name" value="KCNH_animal-type"/>
</dbReference>
<dbReference type="InterPro" id="IPR001610">
    <property type="entry name" value="PAC"/>
</dbReference>
<dbReference type="InterPro" id="IPR000014">
    <property type="entry name" value="PAS"/>
</dbReference>
<dbReference type="InterPro" id="IPR000700">
    <property type="entry name" value="PAS-assoc_C"/>
</dbReference>
<dbReference type="InterPro" id="IPR035965">
    <property type="entry name" value="PAS-like_dom_sf"/>
</dbReference>
<dbReference type="InterPro" id="IPR014710">
    <property type="entry name" value="RmlC-like_jellyroll"/>
</dbReference>
<dbReference type="NCBIfam" id="TIGR00229">
    <property type="entry name" value="sensory_box"/>
    <property type="match status" value="1"/>
</dbReference>
<dbReference type="PANTHER" id="PTHR10217:SF530">
    <property type="entry name" value="POTASSIUM VOLTAGE-GATED CHANNEL SUBFAMILY H MEMBER 1"/>
    <property type="match status" value="1"/>
</dbReference>
<dbReference type="PANTHER" id="PTHR10217">
    <property type="entry name" value="VOLTAGE AND LIGAND GATED POTASSIUM CHANNEL"/>
    <property type="match status" value="1"/>
</dbReference>
<dbReference type="Pfam" id="PF00027">
    <property type="entry name" value="cNMP_binding"/>
    <property type="match status" value="1"/>
</dbReference>
<dbReference type="Pfam" id="PF00520">
    <property type="entry name" value="Ion_trans"/>
    <property type="match status" value="1"/>
</dbReference>
<dbReference type="Pfam" id="PF13426">
    <property type="entry name" value="PAS_9"/>
    <property type="match status" value="1"/>
</dbReference>
<dbReference type="PRINTS" id="PR01463">
    <property type="entry name" value="EAGCHANLFMLY"/>
</dbReference>
<dbReference type="PRINTS" id="PR01464">
    <property type="entry name" value="EAGCHANNEL"/>
</dbReference>
<dbReference type="SMART" id="SM00100">
    <property type="entry name" value="cNMP"/>
    <property type="match status" value="1"/>
</dbReference>
<dbReference type="SMART" id="SM00086">
    <property type="entry name" value="PAC"/>
    <property type="match status" value="1"/>
</dbReference>
<dbReference type="SUPFAM" id="SSF51206">
    <property type="entry name" value="cAMP-binding domain-like"/>
    <property type="match status" value="1"/>
</dbReference>
<dbReference type="SUPFAM" id="SSF55785">
    <property type="entry name" value="PYP-like sensor domain (PAS domain)"/>
    <property type="match status" value="1"/>
</dbReference>
<dbReference type="SUPFAM" id="SSF81324">
    <property type="entry name" value="Voltage-gated potassium channels"/>
    <property type="match status" value="1"/>
</dbReference>
<dbReference type="PROSITE" id="PS50042">
    <property type="entry name" value="CNMP_BINDING_3"/>
    <property type="match status" value="1"/>
</dbReference>
<dbReference type="PROSITE" id="PS50113">
    <property type="entry name" value="PAC"/>
    <property type="match status" value="1"/>
</dbReference>
<dbReference type="PROSITE" id="PS50112">
    <property type="entry name" value="PAS"/>
    <property type="match status" value="1"/>
</dbReference>
<name>KCNH1_HUMAN</name>
<evidence type="ECO:0000250" key="1">
    <source>
        <dbReference type="UniProtKB" id="Q60603"/>
    </source>
</evidence>
<evidence type="ECO:0000250" key="2">
    <source>
        <dbReference type="UniProtKB" id="Q63472"/>
    </source>
</evidence>
<evidence type="ECO:0000255" key="3"/>
<evidence type="ECO:0000255" key="4">
    <source>
        <dbReference type="PROSITE-ProRule" id="PRU00140"/>
    </source>
</evidence>
<evidence type="ECO:0000255" key="5">
    <source>
        <dbReference type="PROSITE-ProRule" id="PRU00141"/>
    </source>
</evidence>
<evidence type="ECO:0000256" key="6">
    <source>
        <dbReference type="SAM" id="MobiDB-lite"/>
    </source>
</evidence>
<evidence type="ECO:0000269" key="7">
    <source>
    </source>
</evidence>
<evidence type="ECO:0000269" key="8">
    <source>
    </source>
</evidence>
<evidence type="ECO:0000269" key="9">
    <source>
    </source>
</evidence>
<evidence type="ECO:0000269" key="10">
    <source>
    </source>
</evidence>
<evidence type="ECO:0000269" key="11">
    <source>
    </source>
</evidence>
<evidence type="ECO:0000269" key="12">
    <source>
    </source>
</evidence>
<evidence type="ECO:0000269" key="13">
    <source>
    </source>
</evidence>
<evidence type="ECO:0000269" key="14">
    <source>
    </source>
</evidence>
<evidence type="ECO:0000269" key="15">
    <source>
    </source>
</evidence>
<evidence type="ECO:0000269" key="16">
    <source>
    </source>
</evidence>
<evidence type="ECO:0000269" key="17">
    <source>
    </source>
</evidence>
<evidence type="ECO:0000269" key="18">
    <source>
    </source>
</evidence>
<evidence type="ECO:0000269" key="19">
    <source>
    </source>
</evidence>
<evidence type="ECO:0000269" key="20">
    <source>
    </source>
</evidence>
<evidence type="ECO:0000269" key="21">
    <source>
    </source>
</evidence>
<evidence type="ECO:0000269" key="22">
    <source>
    </source>
</evidence>
<evidence type="ECO:0000269" key="23">
    <source>
    </source>
</evidence>
<evidence type="ECO:0000303" key="24">
    <source>
    </source>
</evidence>
<evidence type="ECO:0000303" key="25">
    <source>
    </source>
</evidence>
<evidence type="ECO:0000303" key="26">
    <source>
    </source>
</evidence>
<evidence type="ECO:0000303" key="27">
    <source>
    </source>
</evidence>
<evidence type="ECO:0000303" key="28">
    <source>
    </source>
</evidence>
<evidence type="ECO:0000305" key="29"/>
<evidence type="ECO:0000305" key="30">
    <source>
    </source>
</evidence>
<evidence type="ECO:0000312" key="31">
    <source>
        <dbReference type="HGNC" id="HGNC:6250"/>
    </source>
</evidence>
<evidence type="ECO:0007744" key="32">
    <source>
        <dbReference type="PDB" id="5J7E"/>
    </source>
</evidence>
<evidence type="ECO:0007829" key="33">
    <source>
        <dbReference type="PDB" id="5J7E"/>
    </source>
</evidence>
<organism>
    <name type="scientific">Homo sapiens</name>
    <name type="common">Human</name>
    <dbReference type="NCBI Taxonomy" id="9606"/>
    <lineage>
        <taxon>Eukaryota</taxon>
        <taxon>Metazoa</taxon>
        <taxon>Chordata</taxon>
        <taxon>Craniata</taxon>
        <taxon>Vertebrata</taxon>
        <taxon>Euteleostomi</taxon>
        <taxon>Mammalia</taxon>
        <taxon>Eutheria</taxon>
        <taxon>Euarchontoglires</taxon>
        <taxon>Primates</taxon>
        <taxon>Haplorrhini</taxon>
        <taxon>Catarrhini</taxon>
        <taxon>Hominidae</taxon>
        <taxon>Homo</taxon>
    </lineage>
</organism>
<gene>
    <name evidence="31" type="primary">KCNH1</name>
    <name evidence="24" type="synonym">EAG</name>
    <name evidence="26 27" type="synonym">EAG1</name>
</gene>
<sequence length="989" mass="111423">MTMAGGRRGLVAPQNTFLENIVRRSNDTNFVLGNAQIVDWPIVYSNDGFCKLSGYHRAEVMQKSSTCSFMYGELTDKDTIEKVRQTFENYEMNSFEILMYKKNRTPVWFFVKIAPIRNEQDKVVLFLCTFSDITAFKQPIEDDSCKGWGKFARLTRALTSSRGVLQQLAPSVQKGENVHKHSRLAEVLQLGSDILPQYKQEAPKTPPHIILHYCVFKTTWDWIILILTFYTAILVPYNVSFKTRQNNVAWLVVDSIVDVIFLVDIVLNFHTTFVGPAGEVISDPKLIRMNYLKTWFVIDLLSCLPYDVINAFENVDEVSAFMGDPGKIGFADQIPPPLEGRESQGISSLFSSLKVVRLLRLGRVARKLDHYIEYGAAVLVLLVCVFGLAAHWMACIWYSIGDYEIFDEDTKTIRNNSWLYQLAMDIGTPYQFNGSGSGKWEGGPSKNSVYISSLYFTMTSLTSVGFGNIAPSTDIEKIFAVAIMMIGSLLYATIFGNVTTIFQQMYANTNRYHEMLNSVRDFLKLYQVPKGLSERVMDYIVSTWSMSRGIDTEKVLQICPKDMRADICVHLNRKVFKEHPAFRLASDGCLRALAMEFQTVHCAPGDLIYHAGESVDSLCFVVSGSLEVIQDDEVVAILGKGDVFGDVFWKEATLAQSCANVRALTYCDLHVIKRDALQKVLEFYTAFSHSFSRNLILTYNLRKRIVFRKISDVKREEEERMKRKNEAPLILPPDHPVRRLFQRFRQQKEARLAAERGGRDLDDLDVEKGNVLTEHASANHSLVKASVVTVRESPATPVSFQAASTSGVPDHAKLQAPGSECLGPKGGGGDCAKRKSWARFKDACGKSEDWNKVSKAESMETLPERTKASGEATLKKTDSCDSGITKSDLRLDNVGEARSPQDRSPILAEVKHSFYPIPEQTLQATVLEVRHELKEDIKALNAKMTNIEKQLSEILRILTSRRSSQSPQELFEISRPQSPESERDIFGAS</sequence>
<comment type="function">
    <text evidence="7 8 10 13 15 16 17 18 19 21 22 23">Pore-forming (alpha) subunit of a voltage-gated delayed rectifier potassium channel that mediates outward-rectifying potassium currents which, on depolarization, reaches a steady-state level and do not inactivate (PubMed:10880439, PubMed:11943152, PubMed:22732247, PubMed:25420144, PubMed:25556795, PubMed:25915598, PubMed:27005320, PubMed:27325704, PubMed:27618660, PubMed:30149017, PubMed:9738473). The activation kinetics depend on the prepulse potential and external divalent cation concentration (PubMed:11943152). With negative prepulses, the current activation is delayed and slowed down several fold, whereas more positive prepulses speed up activation (PubMed:11943152). The time course of activation is biphasic with a fast and a slowly activating current component (PubMed:11943152). Activates at more positive membrane potentials and exhibit a steeper activation curve (PubMed:11943152). Channel properties are modulated by subunit assembly (PubMed:11943152). Mediates IK(NI) current in myoblasts (PubMed:9738473). Involved in the regulation of cell proliferation and differentiation, in particular adipogenic and osteogenic differentiation in bone marrow-derived mesenchymal stem cells (MSCs) (PubMed:23881642).</text>
</comment>
<comment type="catalytic activity">
    <reaction evidence="7 8 10 15 16 17 18 19 21 22 23">
        <text>K(+)(in) = K(+)(out)</text>
        <dbReference type="Rhea" id="RHEA:29463"/>
        <dbReference type="ChEBI" id="CHEBI:29103"/>
    </reaction>
</comment>
<comment type="activity regulation">
    <text evidence="1 7 18 19 21">Channel activity is inhibited by interaction with Ca(2+)-bound calmodulin (PubMed:10880439, PubMed:27005320, PubMed:27325704, PubMed:27618660). Interaction of a single pore-forming alpha subunit with a calmodulin chain is sufficient to promote channel closure (PubMed:10880439). Channel activity is not regulated by cyclic nucleotides (By similarity). Channel activity is inhibited by binding intracellular phosphatidylinositol-3,5-bisphosphate and phosphatidylinositol-4,5-bisphosphate (PIP2), but is not inhibited by phosphatidylinositol 4-phosphate (PubMed:27005320). Inhibited by the spider kappa-theraphotoxin-Aa1a and mu/kappa-theraphotoxin-Ap1a (PubMed:30149017).</text>
</comment>
<comment type="subunit">
    <text evidence="2 7 8 12 19 20 21">Homomultimer (PubMed:27487920). The potassium channel is composed of a homo- or heterotetrameric complex of pore-forming alpha subunits that can associate with modulating beta subunits. Heteromultimer with KCNH5/EAG2 (PubMed:11943152). Interacts with ALG10B (By similarity). Interacts with RABEP1 (By similarity). Interacts (via C-terminus) with CTTN (PubMed:23144454). Interacts (via C-terminal cytoplasmic region) with Ca(2+)-bound calmodulin (PubMed:10880439, PubMed:27325704, PubMed:27618660). Interacts with the spider kappa-theraphotoxin-Aa1a and mu/kappa-theraphotoxin-Ap1a (PubMed:30149017).</text>
</comment>
<comment type="interaction">
    <interactant intactId="EBI-2909270">
        <id>O95259</id>
    </interactant>
    <interactant intactId="EBI-397435">
        <id>P62158</id>
        <label>CALM3</label>
    </interactant>
    <organismsDiffer>false</organismsDiffer>
    <experiments>4</experiments>
</comment>
<comment type="interaction">
    <interactant intactId="EBI-2909270">
        <id>O95259</id>
    </interactant>
    <interactant intactId="EBI-747570">
        <id>Q7L8L6</id>
        <label>FASTKD5</label>
    </interactant>
    <organismsDiffer>false</organismsDiffer>
    <experiments>3</experiments>
</comment>
<comment type="interaction">
    <interactant intactId="EBI-2909270">
        <id>O95259</id>
    </interactant>
    <interactant intactId="EBI-741158">
        <id>Q96HA8</id>
        <label>NTAQ1</label>
    </interactant>
    <organismsDiffer>false</organismsDiffer>
    <experiments>3</experiments>
</comment>
<comment type="interaction">
    <interactant intactId="EBI-2909270">
        <id>O95259</id>
    </interactant>
    <interactant intactId="EBI-727004">
        <id>O00560</id>
        <label>SDCBP</label>
    </interactant>
    <organismsDiffer>false</organismsDiffer>
    <experiments>3</experiments>
</comment>
<comment type="interaction">
    <interactant intactId="EBI-9836801">
        <id>O95259-2</id>
    </interactant>
    <interactant intactId="EBI-397435">
        <id>P62158</id>
        <label>CALM3</label>
    </interactant>
    <organismsDiffer>false</organismsDiffer>
    <experiments>8</experiments>
</comment>
<comment type="interaction">
    <interactant intactId="EBI-9836801">
        <id>O95259-2</id>
    </interactant>
    <interactant intactId="EBI-458452">
        <id>P02638</id>
        <label>S100B</label>
    </interactant>
    <organismsDiffer>true</organismsDiffer>
    <experiments>2</experiments>
</comment>
<comment type="subcellular location">
    <subcellularLocation>
        <location evidence="7 8 9 10 11 16 18 19 21 23">Cell membrane</location>
        <topology evidence="9">Multi-pass membrane protein</topology>
    </subcellularLocation>
    <subcellularLocation>
        <location evidence="9">Nucleus inner membrane</location>
        <topology evidence="9">Multi-pass membrane protein</topology>
    </subcellularLocation>
    <subcellularLocation>
        <location evidence="2">Cell projection</location>
        <location evidence="2">Dendrite</location>
    </subcellularLocation>
    <subcellularLocation>
        <location evidence="2">Cell projection</location>
        <location evidence="2">Axon</location>
    </subcellularLocation>
    <subcellularLocation>
        <location evidence="2">Presynaptic cell membrane</location>
    </subcellularLocation>
    <subcellularLocation>
        <location evidence="2">Perikaryon</location>
    </subcellularLocation>
    <subcellularLocation>
        <location evidence="2">Postsynaptic density membrane</location>
    </subcellularLocation>
    <subcellularLocation>
        <location evidence="11">Early endosome membrane</location>
    </subcellularLocation>
    <text>Perinuclear KCNH1 is located to NPC-free islands.</text>
</comment>
<comment type="alternative products">
    <event type="alternative splicing"/>
    <isoform>
        <id>O95259-1</id>
        <name>2</name>
        <name>hEAGB</name>
        <sequence type="displayed"/>
    </isoform>
    <isoform>
        <id>O95259-2</id>
        <name>1</name>
        <name>hEAG</name>
        <sequence type="described" ref="VSP_000964"/>
    </isoform>
</comment>
<comment type="tissue specificity">
    <text evidence="23">Highly expressed in brain and in myoblasts at the onset of fusion, but not in other tissues (PubMed:9738473). Detected in HeLa (cervical carcinoma), SH-SY5Y (neuroblastoma) and MCF-7 (epithelial tumor) cells, but not in normal epithelial cells.</text>
</comment>
<comment type="domain">
    <text evidence="2">The segment S4 is probably the voltage-sensor and is characterized by a series of positively charged amino acids at every third position. Conformational changes of voltage-sensor are driven by an electric field generated by a potassium gradient across the membrane.</text>
</comment>
<comment type="domain">
    <text evidence="1">The C-terminal region interacts with the cyclic nucleotide-binding domain and contributes to regulate channel gating.</text>
</comment>
<comment type="domain">
    <text evidence="2 19">The PAS and PAC domain interact with the cyclic nucleotide-binding domain and contribute to the regulation of channel gating (PubMed:27325704). Calmodulin binding clamps together the PAS and PAC domain with the cyclic nucleotide-binding domain from a neighboring subunit and causes a conformation change that leads to channel closure.</text>
</comment>
<comment type="domain">
    <text evidence="1">The cyclic nucleotide-binding domain lacks residues that are essential for nucleotide-binding and cannot bind cyclic nucleotides. Instead, residues from the C-terminal domain (the so-called intrinsic ligand) bind in the cavity that would be expected to bind cyclic nucleotides. Interaction with the C-terminal region hinders interaction with CALM and reduces the affinity for CALM.</text>
</comment>
<comment type="domain">
    <text evidence="2">The PAS and the cyclic nucleotide-binding domain (CNBHD) interact with the transmembrane voltage sensors (VS) that modulate voltage-dependent gating and provide evidence that VS movement destabilizes these interactions to promote channel opening.</text>
</comment>
<comment type="PTM">
    <text evidence="14">Channel activity is regulated via tyrosine phosphorylation/dephosphorylation by SRC and PTPN6 (PubMed:24587194).</text>
</comment>
<comment type="disease" evidence="15">
    <disease id="DI-04297">
        <name>Temple-Baraitser syndrome</name>
        <acronym>TMBTS</acronym>
        <description>A developmental disorder characterized by intellectual disability, epilepsy, hypoplasia or aplasia of the thumb and great toe nails, and broadening and/or elongation of the thumbs and halluces, which have a tubular aspect. Some patients show facial dysmorphism.</description>
        <dbReference type="MIM" id="611816"/>
    </disease>
    <text>The disease is caused by variants affecting the gene represented in this entry.</text>
</comment>
<comment type="disease" evidence="17">
    <disease id="DI-04477">
        <name>Zimmermann-Laband syndrome 1</name>
        <acronym>ZLS1</acronym>
        <description>A form of Zimmermann-Laband syndrome, a rare developmental disorder characterized by facial dysmorphism with bulbous nose and thick floppy ears, gingival enlargement, hypoplasia or aplasia of terminal phalanges and nails, hypertrichosis, joint hyperextensibility, and hepatosplenomegaly. Some patients manifest intellectual disability with or without epilepsy. ZLS1 inheritance is autosomal dominant.</description>
        <dbReference type="MIM" id="135500"/>
    </disease>
    <text>The disease is caused by variants affecting the gene represented in this entry.</text>
</comment>
<comment type="similarity">
    <text evidence="29">Belongs to the potassium channel family. H (Eag) (TC 1.A.1.20) subfamily. Kv10.1/KCNH1 sub-subfamily.</text>
</comment>
<comment type="online information" name="Atlas of Genetics and Cytogenetics in Oncology and Haematology">
    <link uri="https://atlasgeneticsoncology.org/gene/41048/KCNH1"/>
</comment>
<comment type="online information" name="Protein Spotlight">
    <link uri="https://www.proteinspotlight.org/back_issues/267/"/>
    <text>Seizure - Issue 267 of March 2024</text>
</comment>
<reference key="1">
    <citation type="journal article" date="1998" name="FEBS Lett.">
        <title>Cloning of a human ether-a-go-go potassium channel expressed in myoblasts at the onset of fusion.</title>
        <authorList>
            <person name="Occhiodoro T."/>
            <person name="Bernheim L."/>
            <person name="Liu J.-H."/>
            <person name="Bijlenga P."/>
            <person name="Sinnreich M."/>
            <person name="Bader C.R."/>
            <person name="Fischer-Lougheed J."/>
        </authorList>
    </citation>
    <scope>NUCLEOTIDE SEQUENCE [MRNA] (ISOFORM 2)</scope>
    <scope>FUNCTION</scope>
    <scope>TRANSPORTER ACTIVITY</scope>
    <scope>SUBCELLULAR LOCATION</scope>
    <scope>TISSUE SPECIFICITY</scope>
    <source>
        <tissue>Myoblast</tissue>
    </source>
</reference>
<reference key="2">
    <citation type="journal article" date="1999" name="EMBO J.">
        <title>Oncogenic potential of EAG K(+) channels.</title>
        <authorList>
            <person name="Pardo L.A."/>
            <person name="del Camino D."/>
            <person name="Sanchez A."/>
            <person name="Alves F."/>
            <person name="Brueggemann A."/>
            <person name="Beckh S."/>
            <person name="Stuehmer W."/>
        </authorList>
    </citation>
    <scope>NUCLEOTIDE SEQUENCE [MRNA] (ISOFORMS 1 AND 2)</scope>
    <source>
        <tissue>Brain</tissue>
    </source>
</reference>
<reference key="3">
    <citation type="journal article" date="2006" name="Nature">
        <title>The DNA sequence and biological annotation of human chromosome 1.</title>
        <authorList>
            <person name="Gregory S.G."/>
            <person name="Barlow K.F."/>
            <person name="McLay K.E."/>
            <person name="Kaul R."/>
            <person name="Swarbreck D."/>
            <person name="Dunham A."/>
            <person name="Scott C.E."/>
            <person name="Howe K.L."/>
            <person name="Woodfine K."/>
            <person name="Spencer C.C.A."/>
            <person name="Jones M.C."/>
            <person name="Gillson C."/>
            <person name="Searle S."/>
            <person name="Zhou Y."/>
            <person name="Kokocinski F."/>
            <person name="McDonald L."/>
            <person name="Evans R."/>
            <person name="Phillips K."/>
            <person name="Atkinson A."/>
            <person name="Cooper R."/>
            <person name="Jones C."/>
            <person name="Hall R.E."/>
            <person name="Andrews T.D."/>
            <person name="Lloyd C."/>
            <person name="Ainscough R."/>
            <person name="Almeida J.P."/>
            <person name="Ambrose K.D."/>
            <person name="Anderson F."/>
            <person name="Andrew R.W."/>
            <person name="Ashwell R.I.S."/>
            <person name="Aubin K."/>
            <person name="Babbage A.K."/>
            <person name="Bagguley C.L."/>
            <person name="Bailey J."/>
            <person name="Beasley H."/>
            <person name="Bethel G."/>
            <person name="Bird C.P."/>
            <person name="Bray-Allen S."/>
            <person name="Brown J.Y."/>
            <person name="Brown A.J."/>
            <person name="Buckley D."/>
            <person name="Burton J."/>
            <person name="Bye J."/>
            <person name="Carder C."/>
            <person name="Chapman J.C."/>
            <person name="Clark S.Y."/>
            <person name="Clarke G."/>
            <person name="Clee C."/>
            <person name="Cobley V."/>
            <person name="Collier R.E."/>
            <person name="Corby N."/>
            <person name="Coville G.J."/>
            <person name="Davies J."/>
            <person name="Deadman R."/>
            <person name="Dunn M."/>
            <person name="Earthrowl M."/>
            <person name="Ellington A.G."/>
            <person name="Errington H."/>
            <person name="Frankish A."/>
            <person name="Frankland J."/>
            <person name="French L."/>
            <person name="Garner P."/>
            <person name="Garnett J."/>
            <person name="Gay L."/>
            <person name="Ghori M.R.J."/>
            <person name="Gibson R."/>
            <person name="Gilby L.M."/>
            <person name="Gillett W."/>
            <person name="Glithero R.J."/>
            <person name="Grafham D.V."/>
            <person name="Griffiths C."/>
            <person name="Griffiths-Jones S."/>
            <person name="Grocock R."/>
            <person name="Hammond S."/>
            <person name="Harrison E.S.I."/>
            <person name="Hart E."/>
            <person name="Haugen E."/>
            <person name="Heath P.D."/>
            <person name="Holmes S."/>
            <person name="Holt K."/>
            <person name="Howden P.J."/>
            <person name="Hunt A.R."/>
            <person name="Hunt S.E."/>
            <person name="Hunter G."/>
            <person name="Isherwood J."/>
            <person name="James R."/>
            <person name="Johnson C."/>
            <person name="Johnson D."/>
            <person name="Joy A."/>
            <person name="Kay M."/>
            <person name="Kershaw J.K."/>
            <person name="Kibukawa M."/>
            <person name="Kimberley A.M."/>
            <person name="King A."/>
            <person name="Knights A.J."/>
            <person name="Lad H."/>
            <person name="Laird G."/>
            <person name="Lawlor S."/>
            <person name="Leongamornlert D.A."/>
            <person name="Lloyd D.M."/>
            <person name="Loveland J."/>
            <person name="Lovell J."/>
            <person name="Lush M.J."/>
            <person name="Lyne R."/>
            <person name="Martin S."/>
            <person name="Mashreghi-Mohammadi M."/>
            <person name="Matthews L."/>
            <person name="Matthews N.S.W."/>
            <person name="McLaren S."/>
            <person name="Milne S."/>
            <person name="Mistry S."/>
            <person name="Moore M.J.F."/>
            <person name="Nickerson T."/>
            <person name="O'Dell C.N."/>
            <person name="Oliver K."/>
            <person name="Palmeiri A."/>
            <person name="Palmer S.A."/>
            <person name="Parker A."/>
            <person name="Patel D."/>
            <person name="Pearce A.V."/>
            <person name="Peck A.I."/>
            <person name="Pelan S."/>
            <person name="Phelps K."/>
            <person name="Phillimore B.J."/>
            <person name="Plumb R."/>
            <person name="Rajan J."/>
            <person name="Raymond C."/>
            <person name="Rouse G."/>
            <person name="Saenphimmachak C."/>
            <person name="Sehra H.K."/>
            <person name="Sheridan E."/>
            <person name="Shownkeen R."/>
            <person name="Sims S."/>
            <person name="Skuce C.D."/>
            <person name="Smith M."/>
            <person name="Steward C."/>
            <person name="Subramanian S."/>
            <person name="Sycamore N."/>
            <person name="Tracey A."/>
            <person name="Tromans A."/>
            <person name="Van Helmond Z."/>
            <person name="Wall M."/>
            <person name="Wallis J.M."/>
            <person name="White S."/>
            <person name="Whitehead S.L."/>
            <person name="Wilkinson J.E."/>
            <person name="Willey D.L."/>
            <person name="Williams H."/>
            <person name="Wilming L."/>
            <person name="Wray P.W."/>
            <person name="Wu Z."/>
            <person name="Coulson A."/>
            <person name="Vaudin M."/>
            <person name="Sulston J.E."/>
            <person name="Durbin R.M."/>
            <person name="Hubbard T."/>
            <person name="Wooster R."/>
            <person name="Dunham I."/>
            <person name="Carter N.P."/>
            <person name="McVean G."/>
            <person name="Ross M.T."/>
            <person name="Harrow J."/>
            <person name="Olson M.V."/>
            <person name="Beck S."/>
            <person name="Rogers J."/>
            <person name="Bentley D.R."/>
        </authorList>
    </citation>
    <scope>NUCLEOTIDE SEQUENCE [LARGE SCALE GENOMIC DNA]</scope>
</reference>
<reference key="4">
    <citation type="submission" date="2005-09" db="EMBL/GenBank/DDBJ databases">
        <authorList>
            <person name="Mural R.J."/>
            <person name="Istrail S."/>
            <person name="Sutton G.G."/>
            <person name="Florea L."/>
            <person name="Halpern A.L."/>
            <person name="Mobarry C.M."/>
            <person name="Lippert R."/>
            <person name="Walenz B."/>
            <person name="Shatkay H."/>
            <person name="Dew I."/>
            <person name="Miller J.R."/>
            <person name="Flanigan M.J."/>
            <person name="Edwards N.J."/>
            <person name="Bolanos R."/>
            <person name="Fasulo D."/>
            <person name="Halldorsson B.V."/>
            <person name="Hannenhalli S."/>
            <person name="Turner R."/>
            <person name="Yooseph S."/>
            <person name="Lu F."/>
            <person name="Nusskern D.R."/>
            <person name="Shue B.C."/>
            <person name="Zheng X.H."/>
            <person name="Zhong F."/>
            <person name="Delcher A.L."/>
            <person name="Huson D.H."/>
            <person name="Kravitz S.A."/>
            <person name="Mouchard L."/>
            <person name="Reinert K."/>
            <person name="Remington K.A."/>
            <person name="Clark A.G."/>
            <person name="Waterman M.S."/>
            <person name="Eichler E.E."/>
            <person name="Adams M.D."/>
            <person name="Hunkapiller M.W."/>
            <person name="Myers E.W."/>
            <person name="Venter J.C."/>
        </authorList>
    </citation>
    <scope>NUCLEOTIDE SEQUENCE [LARGE SCALE GENOMIC DNA]</scope>
</reference>
<reference key="5">
    <citation type="journal article" date="2004" name="Genome Res.">
        <title>The status, quality, and expansion of the NIH full-length cDNA project: the Mammalian Gene Collection (MGC).</title>
        <authorList>
            <consortium name="The MGC Project Team"/>
        </authorList>
    </citation>
    <scope>NUCLEOTIDE SEQUENCE [LARGE SCALE MRNA] (ISOFORM 1)</scope>
    <source>
        <tissue>Brain</tissue>
    </source>
</reference>
<reference key="6">
    <citation type="journal article" date="2000" name="EMBO J.">
        <title>Inhibition of human ether a go-go potassium channels by Ca(2+)/calmodulin.</title>
        <authorList>
            <person name="Schoenherr R."/>
            <person name="Lober K."/>
            <person name="Heinemann S.H."/>
        </authorList>
    </citation>
    <scope>FUNCTION</scope>
    <scope>TRANSPORTER ACTIVITY</scope>
    <scope>SUBCELLULAR LOCATION</scope>
    <scope>CALMODULIN-BINDING DOMAIN</scope>
    <scope>ACTIVITY REGULATION</scope>
</reference>
<reference key="7">
    <citation type="journal article" date="2002" name="FEBS Lett.">
        <title>Functional distinction of human EAG1 and EAG2 potassium channels.</title>
        <authorList>
            <person name="Schoenherr R."/>
            <person name="Gessner G."/>
            <person name="Loeber K."/>
            <person name="Heinemann S.H."/>
        </authorList>
    </citation>
    <scope>FUNCTION</scope>
    <scope>TRANSPORTER ACTIVITY</scope>
    <scope>SUBCELLULAR LOCATION</scope>
    <scope>INTERACTION WITH KCNH5</scope>
</reference>
<reference key="8">
    <citation type="journal article" date="2011" name="PLoS ONE">
        <title>Functional K(v)10.1 channels localize to the inner nuclear membrane.</title>
        <authorList>
            <person name="Chen Y."/>
            <person name="Sanchez A."/>
            <person name="Rubio M.E."/>
            <person name="Kohl T."/>
            <person name="Pardo L.A."/>
            <person name="Stuhmer W."/>
        </authorList>
    </citation>
    <scope>SUBCELLULAR LOCATION</scope>
</reference>
<reference key="9">
    <citation type="journal article" date="2012" name="FEBS Lett.">
        <title>Physical and functional interaction of KV10.1 with Rabaptin-5 impacts ion channel trafficking.</title>
        <authorList>
            <person name="Ninkovic M."/>
            <person name="Mitkovski M."/>
            <person name="Kohl T."/>
            <person name="Stuhmer W."/>
            <person name="Pardo L.A."/>
        </authorList>
    </citation>
    <scope>SUBCELLULAR LOCATION</scope>
</reference>
<reference key="10">
    <citation type="journal article" date="2012" name="J. Biol. Chem.">
        <title>Cortactin controls surface expression of the voltage-gated potassium channel K(V)10.1.</title>
        <authorList>
            <person name="Herrmann S."/>
            <person name="Ninkovic M."/>
            <person name="Kohl T."/>
            <person name="Lorinczi E."/>
            <person name="Pardo L.A."/>
        </authorList>
    </citation>
    <scope>INTERACTION WITH CTTN</scope>
</reference>
<reference key="11">
    <citation type="journal article" date="2012" name="J. Mol. Biol.">
        <title>Structural, biochemical, and functional characterization of the cyclic nucleotide binding homology domain from the mouse EAG1 potassium channel.</title>
        <authorList>
            <person name="Marques-Carvalho M.J."/>
            <person name="Sahoo N."/>
            <person name="Muskett F.W."/>
            <person name="Vieira-Pires R.S."/>
            <person name="Gabant G."/>
            <person name="Cadene M."/>
            <person name="Schonherr R."/>
            <person name="Morais-Cabral J.H."/>
        </authorList>
    </citation>
    <scope>FUNCTION</scope>
    <scope>TRANSPORTER ACTIVITY</scope>
    <scope>SUBCELLULAR LOCATION</scope>
    <scope>MUTAGENESIS OF 699-TYR--LEU-701</scope>
</reference>
<reference key="12">
    <citation type="journal article" date="2014" name="J. Cell. Physiol.">
        <title>BKCa and hEag1 channels regulate cell proliferation and differentiation in human bone marrow-derived mesenchymal stem cells.</title>
        <authorList>
            <person name="Zhang Y.Y."/>
            <person name="Yue J."/>
            <person name="Che H."/>
            <person name="Sun H.Y."/>
            <person name="Tse H.F."/>
            <person name="Li G.R."/>
        </authorList>
    </citation>
    <scope>FUNCTION</scope>
</reference>
<reference key="13">
    <citation type="journal article" date="2014" name="PLoS ONE">
        <title>Regulation of hERG and hEAG channels by Src and by SHP-1 tyrosine phosphatase via an ITIM region in the cyclic nucleotide binding domain.</title>
        <authorList>
            <person name="Schlichter L.C."/>
            <person name="Jiang J."/>
            <person name="Wang J."/>
            <person name="Newell E.W."/>
            <person name="Tsui F.W."/>
            <person name="Lam D."/>
        </authorList>
    </citation>
    <scope>PHOSPHORYLATION</scope>
</reference>
<reference key="14">
    <citation type="journal article" date="2015" name="J. Physiol. (Lond.)">
        <title>KV 10.1 opposes activity-dependent increase in Ca2+ influx into the presynaptic terminal of the parallel fibre-Purkinje cell synapse.</title>
        <authorList>
            <person name="Mortensen L.S."/>
            <person name="Schmidt H."/>
            <person name="Farsi Z."/>
            <person name="Barrantes-Freer A."/>
            <person name="Rubio M.E."/>
            <person name="Ufartes R."/>
            <person name="Eilers J."/>
            <person name="Sakaba T."/>
            <person name="Stuehmer W."/>
            <person name="Pardo L.A."/>
        </authorList>
    </citation>
    <scope>FUNCTION</scope>
    <scope>TRANSPORTER ACTIVITY</scope>
    <scope>SUBCELLULAR LOCATION</scope>
</reference>
<reference key="15">
    <citation type="journal article" date="2015" name="Nat. Genet.">
        <title>Mutations in the voltage-gated potassium channel gene KCNH1 cause Temple-Baraitser syndrome and epilepsy.</title>
        <authorList>
            <person name="Simons C."/>
            <person name="Rash L.D."/>
            <person name="Crawford J."/>
            <person name="Ma L."/>
            <person name="Cristofori-Armstrong B."/>
            <person name="Miller D."/>
            <person name="Ru K."/>
            <person name="Baillie G.J."/>
            <person name="Alanay Y."/>
            <person name="Jacquinet A."/>
            <person name="Debray F.G."/>
            <person name="Verloes A."/>
            <person name="Shen J."/>
            <person name="Yesil G."/>
            <person name="Guler S."/>
            <person name="Yuksel A."/>
            <person name="Cleary J.G."/>
            <person name="Grimmond S.M."/>
            <person name="McGaughran J."/>
            <person name="King G.F."/>
            <person name="Gabbett M.T."/>
            <person name="Taft R.J."/>
        </authorList>
    </citation>
    <scope>INVOLVEMENT IN TMBTS</scope>
    <scope>VARIANTS TMBTS ASN-217; PHE-489; VAL-494 AND ARG-503</scope>
    <scope>CHARACTERIZATION OF VARIANTS TMBTS ASN-217; PHE-489; VAL-494 AND ARG-503</scope>
    <scope>FUNCTION</scope>
    <scope>TRANSPORTER ACTIVITY</scope>
</reference>
<reference key="16">
    <citation type="journal article" date="2015" name="Nat. Genet.">
        <title>Mutations in KCNH1 and ATP6V1B2 cause Zimmermann-Laband syndrome.</title>
        <authorList>
            <person name="Kortuem F."/>
            <person name="Caputo V."/>
            <person name="Bauer C.K."/>
            <person name="Stella L."/>
            <person name="Ciolfi A."/>
            <person name="Alawi M."/>
            <person name="Bocchinfuso G."/>
            <person name="Flex E."/>
            <person name="Paolacci S."/>
            <person name="Dentici M.L."/>
            <person name="Grammatico P."/>
            <person name="Korenke G.C."/>
            <person name="Leuzzi V."/>
            <person name="Mowat D."/>
            <person name="Nair L.D."/>
            <person name="Nguyen T.T."/>
            <person name="Thierry P."/>
            <person name="White S.M."/>
            <person name="Dallapiccola B."/>
            <person name="Pizzuti A."/>
            <person name="Campeau P.M."/>
            <person name="Tartaglia M."/>
            <person name="Kutsche K."/>
        </authorList>
    </citation>
    <scope>INVOLVEMENT IN ZLS1</scope>
    <scope>VARIANTS ZLS1 TYR-352; ARG-375; VAL-379; LEU-383; VAL-494 AND ARG-496</scope>
    <scope>CHARACTERIZATION OF VARIANTS ZLS1 TYR-352; ARG-375; VAL-379; LEU-383; VAL-494 AND ARG-496</scope>
    <scope>FUNCTION</scope>
    <scope>TRANSPORTER ACTIVITY</scope>
</reference>
<reference key="17">
    <citation type="journal article" date="2016" name="J. Biol. Chem.">
        <title>Calmodulin regulates human ether a go-go 1 (hEAG1) potassium channels through interactions of the Eag domain with the cyclic nucleotide binding homology domain.</title>
        <authorList>
            <person name="Loerinczi E."/>
            <person name="Helliwell M."/>
            <person name="Finch A."/>
            <person name="Stansfeld P.J."/>
            <person name="Davies N.W."/>
            <person name="Mahaut-Smith M."/>
            <person name="Muskett F.W."/>
            <person name="Mitcheson J.S."/>
        </authorList>
    </citation>
    <scope>FUNCTION</scope>
    <scope>TRANSPORTER ACTIVITY</scope>
    <scope>SUBCELLULAR LOCATION</scope>
    <scope>ACTIVITY REGULATION</scope>
    <scope>DOMAIN</scope>
</reference>
<reference key="18">
    <citation type="journal article" date="2016" name="Sci. Rep.">
        <title>Human EAG channels are directly modulated by PIP2 as revealed by electrophysiological and optical interference investigations.</title>
        <authorList>
            <person name="Han B."/>
            <person name="He K."/>
            <person name="Cai C."/>
            <person name="Tang Y."/>
            <person name="Yang L."/>
            <person name="Heinemann S.H."/>
            <person name="Hoshi T."/>
            <person name="Hou S."/>
        </authorList>
    </citation>
    <scope>FUNCTION</scope>
    <scope>TRANSPORTER ACTIVITY</scope>
    <scope>SUBCELLULAR LOCATION</scope>
    <scope>ACTIVITY REGULATION</scope>
</reference>
<reference key="19">
    <citation type="journal article" date="2016" name="Structure">
        <title>Molecular insights into the mechanism of calmodulin inhibition of the EAG1 potassium channel.</title>
        <authorList>
            <person name="Marques-Carvalho M.J."/>
            <person name="Oppermann J."/>
            <person name="Munoz E."/>
            <person name="Fernandes A.S."/>
            <person name="Gabant G."/>
            <person name="Cadene M."/>
            <person name="Heinemann S.H."/>
            <person name="Schoenherr R."/>
            <person name="Morais-Cabral J.H."/>
        </authorList>
    </citation>
    <scope>FUNCTION</scope>
    <scope>TRANSPORTER ACTIVITY</scope>
    <scope>SUBCELLULAR LOCATION</scope>
    <scope>ACTIVITY REGULATION</scope>
    <scope>INTERACTION WITH CALM</scope>
    <scope>MUTAGENESIS OF VAL-737 AND LEU-740</scope>
</reference>
<reference key="20">
    <citation type="journal article" date="2018" name="Biochem. Pharmacol.">
        <title>Novel venom-derived inhibitors of the human EAG channel, a putative antiepileptic drug target.</title>
        <authorList>
            <person name="Ma L."/>
            <person name="Chin Y.K.Y."/>
            <person name="Dekan Z."/>
            <person name="Herzig V."/>
            <person name="Chow C.Y."/>
            <person name="Heighway J."/>
            <person name="Lam S.W."/>
            <person name="Guillemin G.J."/>
            <person name="Alewood P.F."/>
            <person name="King G.F."/>
        </authorList>
    </citation>
    <scope>FUNCTION</scope>
    <scope>TRANSPORTER ACTIVITY</scope>
    <scope>ACTIVITY REGULATION</scope>
    <scope>SUBUNIT</scope>
</reference>
<reference evidence="32" key="21">
    <citation type="journal article" date="2016" name="Acta Crystallogr. F Struct. Biol. Commun.">
        <title>Crystal structure of the PAS domain of the hEAG potassium channel.</title>
        <authorList>
            <person name="Tang X."/>
            <person name="Shao J."/>
            <person name="Qin X."/>
        </authorList>
    </citation>
    <scope>X-RAY CRYSTALLOGRAPHY (1.90 ANGSTROMS) OF 1-146</scope>
    <scope>SUBUNIT</scope>
</reference>
<keyword id="KW-0002">3D-structure</keyword>
<keyword id="KW-0025">Alternative splicing</keyword>
<keyword id="KW-0112">Calmodulin-binding</keyword>
<keyword id="KW-1003">Cell membrane</keyword>
<keyword id="KW-0966">Cell projection</keyword>
<keyword id="KW-0225">Disease variant</keyword>
<keyword id="KW-0967">Endosome</keyword>
<keyword id="KW-0887">Epilepsy</keyword>
<keyword id="KW-0325">Glycoprotein</keyword>
<keyword id="KW-0991">Intellectual disability</keyword>
<keyword id="KW-0407">Ion channel</keyword>
<keyword id="KW-0406">Ion transport</keyword>
<keyword id="KW-0446">Lipid-binding</keyword>
<keyword id="KW-0472">Membrane</keyword>
<keyword id="KW-0539">Nucleus</keyword>
<keyword id="KW-0597">Phosphoprotein</keyword>
<keyword id="KW-0628">Postsynaptic cell membrane</keyword>
<keyword id="KW-0630">Potassium</keyword>
<keyword id="KW-0631">Potassium channel</keyword>
<keyword id="KW-0633">Potassium transport</keyword>
<keyword id="KW-1267">Proteomics identification</keyword>
<keyword id="KW-1185">Reference proteome</keyword>
<keyword id="KW-0770">Synapse</keyword>
<keyword id="KW-0812">Transmembrane</keyword>
<keyword id="KW-1133">Transmembrane helix</keyword>
<keyword id="KW-0813">Transport</keyword>
<keyword id="KW-0851">Voltage-gated channel</keyword>
<accession>O95259</accession>
<accession>B1AQ26</accession>
<accession>O76035</accession>
<accession>Q14CL3</accession>